<sequence length="396" mass="43941">MKSTIFFILSLLLMLENQAAGRRLSGSAGAQDPVISRVWAKSQDMEEAVSGSGLTAEGGRGSDREESVGERVSLRQEEFEKGHIRSSVEEPEGEHVSVRREHLEKSHIRHNVEEPEGERVSVRREHLEKSHIRHSAEEPEGERVSVRHERVEKTHKRFHDDSVEESDSASSVDHRKKGHIRFKRQDPIAALAAIEGQDAVKDSLWVKGQASSEERFSVKGQDLVKGHLQMKGQSSLAERFSVTGQDSVKGRLQMKGQDTLAERFSMTGQDSVKSRLQMKGQDSLSERFSMTGQDSVKGRLQMKGQSSLAERFSVTGQDSVKGRLQMKGKDTLAERFSVTGQDSVKGRLQMKGHDLLEERFSVSGQDSVKGLARIKGQESVQSGFSVKGQGSLKGLI</sequence>
<protein>
    <recommendedName>
        <fullName>Seminal vesicle major clotting proteins</fullName>
    </recommendedName>
    <component>
        <recommendedName>
            <fullName>Seminal vesicle protein 1</fullName>
            <shortName>SVP-1</shortName>
        </recommendedName>
    </component>
    <component>
        <recommendedName>
            <fullName>Seminal vesicle protein 3/4</fullName>
            <shortName>SVP-3/4</shortName>
        </recommendedName>
    </component>
</protein>
<dbReference type="EMBL" id="U59711">
    <property type="protein sequence ID" value="AAB06044.1"/>
    <property type="molecule type" value="Genomic_DNA"/>
</dbReference>
<dbReference type="EMBL" id="AF001982">
    <property type="protein sequence ID" value="AAC53395.1"/>
    <property type="molecule type" value="mRNA"/>
</dbReference>
<dbReference type="EMBL" id="AF002657">
    <property type="protein sequence ID" value="AAB82089.1"/>
    <property type="status" value="ALT_INIT"/>
    <property type="molecule type" value="mRNA"/>
</dbReference>
<dbReference type="EMBL" id="AF002658">
    <property type="protein sequence ID" value="AAB82090.1"/>
    <property type="status" value="ALT_INIT"/>
    <property type="molecule type" value="mRNA"/>
</dbReference>
<dbReference type="EMBL" id="M33295">
    <property type="protein sequence ID" value="AAA37054.1"/>
    <property type="molecule type" value="mRNA"/>
</dbReference>
<dbReference type="EMBL" id="J02968">
    <property type="protein sequence ID" value="AAA37048.1"/>
    <property type="molecule type" value="mRNA"/>
</dbReference>
<dbReference type="PIR" id="B41405">
    <property type="entry name" value="A33889"/>
</dbReference>
<dbReference type="RefSeq" id="NP_001166201.1">
    <property type="nucleotide sequence ID" value="NM_001172730.1"/>
</dbReference>
<dbReference type="STRING" id="10141.ENSCPOP00000006002"/>
<dbReference type="GeneID" id="100379263"/>
<dbReference type="KEGG" id="cpoc:100379263"/>
<dbReference type="CTD" id="41491"/>
<dbReference type="eggNOG" id="ENOG502SZ79">
    <property type="taxonomic scope" value="Eukaryota"/>
</dbReference>
<dbReference type="InParanoid" id="P05995"/>
<dbReference type="OrthoDB" id="5104187at2759"/>
<dbReference type="Proteomes" id="UP000005447">
    <property type="component" value="Unassembled WGS sequence"/>
</dbReference>
<dbReference type="GO" id="GO:0005576">
    <property type="term" value="C:extracellular region"/>
    <property type="evidence" value="ECO:0007669"/>
    <property type="project" value="UniProtKB-SubCell"/>
</dbReference>
<dbReference type="GO" id="GO:0042628">
    <property type="term" value="P:mating plug formation"/>
    <property type="evidence" value="ECO:0007669"/>
    <property type="project" value="UniProtKB-KW"/>
</dbReference>
<dbReference type="InterPro" id="IPR002098">
    <property type="entry name" value="SVP_I"/>
</dbReference>
<dbReference type="PROSITE" id="PS00313">
    <property type="entry name" value="SVP_I"/>
    <property type="match status" value="8"/>
</dbReference>
<organism>
    <name type="scientific">Cavia porcellus</name>
    <name type="common">Guinea pig</name>
    <dbReference type="NCBI Taxonomy" id="10141"/>
    <lineage>
        <taxon>Eukaryota</taxon>
        <taxon>Metazoa</taxon>
        <taxon>Chordata</taxon>
        <taxon>Craniata</taxon>
        <taxon>Vertebrata</taxon>
        <taxon>Euteleostomi</taxon>
        <taxon>Mammalia</taxon>
        <taxon>Eutheria</taxon>
        <taxon>Euarchontoglires</taxon>
        <taxon>Glires</taxon>
        <taxon>Rodentia</taxon>
        <taxon>Hystricomorpha</taxon>
        <taxon>Caviidae</taxon>
        <taxon>Cavia</taxon>
    </lineage>
</organism>
<keyword id="KW-0165">Cleavage on pair of basic residues</keyword>
<keyword id="KW-0188">Copulatory plug</keyword>
<keyword id="KW-0903">Direct protein sequencing</keyword>
<keyword id="KW-1185">Reference proteome</keyword>
<keyword id="KW-0677">Repeat</keyword>
<keyword id="KW-0964">Secreted</keyword>
<keyword id="KW-0732">Signal</keyword>
<comment type="function">
    <text>SVP-1 serves as substrate in the formation of the copulatory plug. SVP-3 and SVP-4 may also contribute to the clot.</text>
</comment>
<comment type="subcellular location">
    <subcellularLocation>
        <location>Secreted</location>
    </subcellularLocation>
</comment>
<comment type="PTM">
    <text>SVP-3 may be a post-translationally modified form of SVP-4.</text>
</comment>
<comment type="PTM">
    <text>Covalent clotting of SVP-1 is catalyzed by a transglutaminase secreted by the anterior prostate through the formation of gamma-glutamyl-epsilon-lysine cross-links. The conserved 2 Lys and 1 Gln residues per functional unit seem to be the residues involved in the formation of those cross-links.</text>
</comment>
<comment type="miscellaneous">
    <text>SVP-1, SVP-3, and SVP-4 are 3 of the 4 major secretory proteins, secreted by the guinea pig seminal vesicle epithelium (sve).</text>
</comment>
<comment type="miscellaneous">
    <text>SVP-1 contains 8 and a half repeats of 24 amino acid clotting domain. SVP-3/4 also contains 4 repeats of a 24 amino acid domain, but which is unrelated to that of SVP-1.</text>
</comment>
<comment type="similarity">
    <text evidence="3">To the SVP-2 precursor, particularly in regions where protein processing must occur.</text>
</comment>
<comment type="sequence caution" evidence="3">
    <conflict type="erroneous initiation">
        <sequence resource="EMBL-CDS" id="AAB82089"/>
    </conflict>
</comment>
<comment type="sequence caution" evidence="3">
    <conflict type="erroneous initiation">
        <sequence resource="EMBL-CDS" id="AAB82090"/>
    </conflict>
</comment>
<feature type="signal peptide">
    <location>
        <begin position="1"/>
        <end position="21"/>
    </location>
</feature>
<feature type="chain" id="PRO_0000022442" description="Seminal vesicle protein 3/4">
    <location>
        <begin position="22"/>
        <end position="176"/>
    </location>
</feature>
<feature type="propeptide" id="PRO_0000022443" evidence="1">
    <location>
        <begin position="177"/>
        <end position="192"/>
    </location>
</feature>
<feature type="chain" id="PRO_0000022444" description="Seminal vesicle protein 1">
    <location>
        <begin position="193"/>
        <end position="396"/>
    </location>
</feature>
<feature type="repeat" description="SVP-3/-4 repeat">
    <location>
        <begin position="65"/>
        <end position="88"/>
    </location>
</feature>
<feature type="repeat" description="SVP-3/-4 repeat">
    <location>
        <begin position="89"/>
        <end position="112"/>
    </location>
</feature>
<feature type="repeat" description="SVP-3/-4 repeat">
    <location>
        <begin position="113"/>
        <end position="136"/>
    </location>
</feature>
<feature type="repeat" description="SVP-3/-4 repeat; truncated">
    <location>
        <begin position="137"/>
        <end position="157"/>
    </location>
</feature>
<feature type="repeat" description="SVP-1 clotting 1">
    <location>
        <begin position="194"/>
        <end position="217"/>
    </location>
</feature>
<feature type="repeat" description="SVP-1 clotting 2">
    <location>
        <begin position="218"/>
        <end position="241"/>
    </location>
</feature>
<feature type="repeat" description="SVP-1 clotting 3">
    <location>
        <begin position="242"/>
        <end position="265"/>
    </location>
</feature>
<feature type="repeat" description="SVP-1 clotting 4">
    <location>
        <begin position="266"/>
        <end position="289"/>
    </location>
</feature>
<feature type="repeat" description="SVP-1 clotting 5">
    <location>
        <begin position="290"/>
        <end position="313"/>
    </location>
</feature>
<feature type="repeat" description="SVP-1 clotting 6">
    <location>
        <begin position="314"/>
        <end position="337"/>
    </location>
</feature>
<feature type="repeat" description="SVP-1 clotting 7">
    <location>
        <begin position="338"/>
        <end position="361"/>
    </location>
</feature>
<feature type="repeat" description="SVP-1 clotting 8">
    <location>
        <begin position="362"/>
        <end position="385"/>
    </location>
</feature>
<feature type="repeat" description="SVP-1 clotting 9; truncated">
    <location>
        <begin position="386"/>
        <end position="396"/>
    </location>
</feature>
<feature type="region of interest" description="Disordered" evidence="2">
    <location>
        <begin position="45"/>
        <end position="178"/>
    </location>
</feature>
<feature type="region of interest" description="9 X tandem repeats of SVP-1 like motif">
    <location>
        <begin position="194"/>
        <end position="396"/>
    </location>
</feature>
<feature type="region of interest" description="Disordered" evidence="2">
    <location>
        <begin position="377"/>
        <end position="396"/>
    </location>
</feature>
<feature type="compositionally biased region" description="Basic and acidic residues" evidence="2">
    <location>
        <begin position="60"/>
        <end position="152"/>
    </location>
</feature>
<proteinExistence type="evidence at protein level"/>
<name>SVP1_CAVPO</name>
<evidence type="ECO:0000255" key="1"/>
<evidence type="ECO:0000256" key="2">
    <source>
        <dbReference type="SAM" id="MobiDB-lite"/>
    </source>
</evidence>
<evidence type="ECO:0000305" key="3"/>
<reference key="1">
    <citation type="journal article" date="1996" name="J. Biol. Chem.">
        <title>Exons lost and found. Unusual evolution of a seminal vesicle transglutaminase substrate.</title>
        <authorList>
            <person name="Hagstrom J.E."/>
            <person name="Fautsch M.P."/>
            <person name="Perdok M."/>
            <person name="Vrabel A."/>
            <person name="Wieben E.D."/>
        </authorList>
    </citation>
    <scope>NUCLEOTIDE SEQUENCE</scope>
    <source>
        <tissue>Testis</tissue>
    </source>
</reference>
<reference key="2">
    <citation type="journal article" date="1997" name="J. Biol. Chem.">
        <title>Production of SVP-1/-3/-4 in guinea pig testis. Characterization of novel transcripts containing long 5'-untranslated regions and multiple upstream AUG codons.</title>
        <authorList>
            <person name="Fautsch M.P."/>
            <person name="Perdok M.M."/>
            <person name="Wieben E.D."/>
        </authorList>
    </citation>
    <scope>NUCLEOTIDE SEQUENCE [MRNA]</scope>
    <source>
        <tissue>Testis</tissue>
    </source>
</reference>
<reference key="3">
    <citation type="journal article" date="1989" name="Mol. Endocrinol.">
        <title>Androgens affect the processing of secretory protein precursors in the guinea pig seminal vesicle. II. Identification of conserved sites for protein processing.</title>
        <authorList>
            <person name="Hagstrom J.E."/>
            <person name="Harvey S."/>
            <person name="Madden B."/>
            <person name="McCormick D."/>
            <person name="Wieben E.D."/>
        </authorList>
    </citation>
    <scope>NUCLEOTIDE SEQUENCE OF 7-396</scope>
</reference>
<reference key="4">
    <citation type="journal article" date="1987" name="Proc. Natl. Acad. Sci. U.S.A.">
        <title>The major clotting protein from guinea pig seminal vesicle contains eight repeats of a 24-amino acid domain.</title>
        <authorList>
            <person name="Moore J.T."/>
            <person name="Hagstrom J."/>
            <person name="McCormick D.J."/>
            <person name="Harvey S."/>
            <person name="Madden B."/>
            <person name="Holicky E."/>
            <person name="Stanford D.R."/>
            <person name="Wieben E.D."/>
        </authorList>
    </citation>
    <scope>NUCLEOTIDE SEQUENCE [MRNA] OF 194-396</scope>
    <scope>PARTIAL PROTEIN SEQUENCE</scope>
</reference>
<accession>P05995</accession>